<comment type="function">
    <text evidence="1">This protein is one of the early assembly proteins of the 50S ribosomal subunit, although it is not seen to bind rRNA by itself. It is important during the early stages of 50S assembly.</text>
</comment>
<comment type="subunit">
    <text evidence="1">Part of the 50S ribosomal subunit.</text>
</comment>
<comment type="similarity">
    <text evidence="1">Belongs to the universal ribosomal protein uL13 family.</text>
</comment>
<organism>
    <name type="scientific">Sulfurimonas denitrificans (strain ATCC 33889 / DSM 1251)</name>
    <name type="common">Thiomicrospira denitrificans (strain ATCC 33889 / DSM 1251)</name>
    <dbReference type="NCBI Taxonomy" id="326298"/>
    <lineage>
        <taxon>Bacteria</taxon>
        <taxon>Pseudomonadati</taxon>
        <taxon>Campylobacterota</taxon>
        <taxon>Epsilonproteobacteria</taxon>
        <taxon>Campylobacterales</taxon>
        <taxon>Sulfurimonadaceae</taxon>
        <taxon>Sulfurimonas</taxon>
    </lineage>
</organism>
<feature type="chain" id="PRO_1000144185" description="Large ribosomal subunit protein uL13">
    <location>
        <begin position="1"/>
        <end position="140"/>
    </location>
</feature>
<evidence type="ECO:0000255" key="1">
    <source>
        <dbReference type="HAMAP-Rule" id="MF_01366"/>
    </source>
</evidence>
<evidence type="ECO:0000305" key="2"/>
<accession>Q30UF8</accession>
<reference key="1">
    <citation type="journal article" date="2008" name="Appl. Environ. Microbiol.">
        <title>Genome of the epsilonproteobacterial chemolithoautotroph Sulfurimonas denitrificans.</title>
        <authorList>
            <person name="Sievert S.M."/>
            <person name="Scott K.M."/>
            <person name="Klotz M.G."/>
            <person name="Chain P.S.G."/>
            <person name="Hauser L.J."/>
            <person name="Hemp J."/>
            <person name="Huegler M."/>
            <person name="Land M."/>
            <person name="Lapidus A."/>
            <person name="Larimer F.W."/>
            <person name="Lucas S."/>
            <person name="Malfatti S.A."/>
            <person name="Meyer F."/>
            <person name="Paulsen I.T."/>
            <person name="Ren Q."/>
            <person name="Simon J."/>
            <person name="Bailey K."/>
            <person name="Diaz E."/>
            <person name="Fitzpatrick K.A."/>
            <person name="Glover B."/>
            <person name="Gwatney N."/>
            <person name="Korajkic A."/>
            <person name="Long A."/>
            <person name="Mobberley J.M."/>
            <person name="Pantry S.N."/>
            <person name="Pazder G."/>
            <person name="Peterson S."/>
            <person name="Quintanilla J.D."/>
            <person name="Sprinkle R."/>
            <person name="Stephens J."/>
            <person name="Thomas P."/>
            <person name="Vaughn R."/>
            <person name="Weber M.J."/>
            <person name="Wooten L.L."/>
        </authorList>
    </citation>
    <scope>NUCLEOTIDE SEQUENCE [LARGE SCALE GENOMIC DNA]</scope>
    <source>
        <strain>ATCC 33889 / DSM 1251</strain>
    </source>
</reference>
<sequence>MKFTKIATPEQIDQKWVLIDAEGKTFGRIITEVATLLRGKNKPCFTPNIDCGDYVVVVNASKAKFNGLGKIANKEYFSYSGYFGSVKSTKMTELLEKNPEKLYKLATRGMLPKTKLGAKMIKKLKIYASAEHPHSAQLAK</sequence>
<proteinExistence type="inferred from homology"/>
<dbReference type="EMBL" id="CP000153">
    <property type="protein sequence ID" value="ABB43373.1"/>
    <property type="molecule type" value="Genomic_DNA"/>
</dbReference>
<dbReference type="RefSeq" id="WP_011371728.1">
    <property type="nucleotide sequence ID" value="NC_007575.1"/>
</dbReference>
<dbReference type="SMR" id="Q30UF8"/>
<dbReference type="STRING" id="326298.Suden_0092"/>
<dbReference type="KEGG" id="tdn:Suden_0092"/>
<dbReference type="eggNOG" id="COG0102">
    <property type="taxonomic scope" value="Bacteria"/>
</dbReference>
<dbReference type="HOGENOM" id="CLU_082184_2_2_7"/>
<dbReference type="OrthoDB" id="9801330at2"/>
<dbReference type="Proteomes" id="UP000002714">
    <property type="component" value="Chromosome"/>
</dbReference>
<dbReference type="GO" id="GO:0022625">
    <property type="term" value="C:cytosolic large ribosomal subunit"/>
    <property type="evidence" value="ECO:0007669"/>
    <property type="project" value="TreeGrafter"/>
</dbReference>
<dbReference type="GO" id="GO:0003729">
    <property type="term" value="F:mRNA binding"/>
    <property type="evidence" value="ECO:0007669"/>
    <property type="project" value="TreeGrafter"/>
</dbReference>
<dbReference type="GO" id="GO:0003735">
    <property type="term" value="F:structural constituent of ribosome"/>
    <property type="evidence" value="ECO:0007669"/>
    <property type="project" value="InterPro"/>
</dbReference>
<dbReference type="GO" id="GO:0017148">
    <property type="term" value="P:negative regulation of translation"/>
    <property type="evidence" value="ECO:0007669"/>
    <property type="project" value="TreeGrafter"/>
</dbReference>
<dbReference type="GO" id="GO:0006412">
    <property type="term" value="P:translation"/>
    <property type="evidence" value="ECO:0007669"/>
    <property type="project" value="UniProtKB-UniRule"/>
</dbReference>
<dbReference type="CDD" id="cd00392">
    <property type="entry name" value="Ribosomal_L13"/>
    <property type="match status" value="1"/>
</dbReference>
<dbReference type="Gene3D" id="3.90.1180.10">
    <property type="entry name" value="Ribosomal protein L13"/>
    <property type="match status" value="1"/>
</dbReference>
<dbReference type="HAMAP" id="MF_01366">
    <property type="entry name" value="Ribosomal_uL13"/>
    <property type="match status" value="1"/>
</dbReference>
<dbReference type="InterPro" id="IPR005822">
    <property type="entry name" value="Ribosomal_uL13"/>
</dbReference>
<dbReference type="InterPro" id="IPR005823">
    <property type="entry name" value="Ribosomal_uL13_bac-type"/>
</dbReference>
<dbReference type="InterPro" id="IPR036899">
    <property type="entry name" value="Ribosomal_uL13_sf"/>
</dbReference>
<dbReference type="NCBIfam" id="TIGR01066">
    <property type="entry name" value="rplM_bact"/>
    <property type="match status" value="1"/>
</dbReference>
<dbReference type="PANTHER" id="PTHR11545:SF2">
    <property type="entry name" value="LARGE RIBOSOMAL SUBUNIT PROTEIN UL13M"/>
    <property type="match status" value="1"/>
</dbReference>
<dbReference type="PANTHER" id="PTHR11545">
    <property type="entry name" value="RIBOSOMAL PROTEIN L13"/>
    <property type="match status" value="1"/>
</dbReference>
<dbReference type="Pfam" id="PF00572">
    <property type="entry name" value="Ribosomal_L13"/>
    <property type="match status" value="1"/>
</dbReference>
<dbReference type="PIRSF" id="PIRSF002181">
    <property type="entry name" value="Ribosomal_L13"/>
    <property type="match status" value="1"/>
</dbReference>
<dbReference type="SUPFAM" id="SSF52161">
    <property type="entry name" value="Ribosomal protein L13"/>
    <property type="match status" value="1"/>
</dbReference>
<name>RL13_SULDN</name>
<gene>
    <name evidence="1" type="primary">rplM</name>
    <name type="ordered locus">Suden_0092</name>
</gene>
<keyword id="KW-1185">Reference proteome</keyword>
<keyword id="KW-0687">Ribonucleoprotein</keyword>
<keyword id="KW-0689">Ribosomal protein</keyword>
<protein>
    <recommendedName>
        <fullName evidence="1">Large ribosomal subunit protein uL13</fullName>
    </recommendedName>
    <alternativeName>
        <fullName evidence="2">50S ribosomal protein L13</fullName>
    </alternativeName>
</protein>